<dbReference type="EMBL" id="AB070094">
    <property type="protein sequence ID" value="BAB63039.1"/>
    <property type="molecule type" value="mRNA"/>
</dbReference>
<dbReference type="EMBL" id="AB070113">
    <property type="protein sequence ID" value="BAB63058.1"/>
    <property type="molecule type" value="mRNA"/>
</dbReference>
<dbReference type="SMR" id="Q95JR6"/>
<dbReference type="STRING" id="9541.ENSMFAP00000026129"/>
<dbReference type="eggNOG" id="KOG1113">
    <property type="taxonomic scope" value="Eukaryota"/>
</dbReference>
<dbReference type="Proteomes" id="UP000233100">
    <property type="component" value="Unplaced"/>
</dbReference>
<dbReference type="GO" id="GO:0005829">
    <property type="term" value="C:cytosol"/>
    <property type="evidence" value="ECO:0007669"/>
    <property type="project" value="UniProtKB-SubCell"/>
</dbReference>
<dbReference type="GO" id="GO:0030552">
    <property type="term" value="F:cAMP binding"/>
    <property type="evidence" value="ECO:0007669"/>
    <property type="project" value="UniProtKB-KW"/>
</dbReference>
<dbReference type="GO" id="GO:0007283">
    <property type="term" value="P:spermatogenesis"/>
    <property type="evidence" value="ECO:0007669"/>
    <property type="project" value="TreeGrafter"/>
</dbReference>
<dbReference type="CDD" id="cd00038">
    <property type="entry name" value="CAP_ED"/>
    <property type="match status" value="1"/>
</dbReference>
<dbReference type="FunFam" id="2.60.120.10:FF:000083">
    <property type="entry name" value="Cyclic nucleotide binding domain containing 2"/>
    <property type="match status" value="1"/>
</dbReference>
<dbReference type="FunFam" id="2.60.120.10:FF:000111">
    <property type="entry name" value="Cyclic nucleotide binding domain containing 2"/>
    <property type="match status" value="1"/>
</dbReference>
<dbReference type="Gene3D" id="2.60.120.10">
    <property type="entry name" value="Jelly Rolls"/>
    <property type="match status" value="2"/>
</dbReference>
<dbReference type="InterPro" id="IPR018488">
    <property type="entry name" value="cNMP-bd_CS"/>
</dbReference>
<dbReference type="InterPro" id="IPR000595">
    <property type="entry name" value="cNMP-bd_dom"/>
</dbReference>
<dbReference type="InterPro" id="IPR018490">
    <property type="entry name" value="cNMP-bd_dom_sf"/>
</dbReference>
<dbReference type="InterPro" id="IPR014710">
    <property type="entry name" value="RmlC-like_jellyroll"/>
</dbReference>
<dbReference type="PANTHER" id="PTHR23011">
    <property type="entry name" value="CYCLIC NUCLEOTIDE-BINDING DOMAIN CONTAINING PROTEIN"/>
    <property type="match status" value="1"/>
</dbReference>
<dbReference type="PANTHER" id="PTHR23011:SF43">
    <property type="entry name" value="CYCLIC NUCLEOTIDE-BINDING DOMAIN-CONTAINING PROTEIN 2"/>
    <property type="match status" value="1"/>
</dbReference>
<dbReference type="Pfam" id="PF00027">
    <property type="entry name" value="cNMP_binding"/>
    <property type="match status" value="1"/>
</dbReference>
<dbReference type="SMART" id="SM00100">
    <property type="entry name" value="cNMP"/>
    <property type="match status" value="1"/>
</dbReference>
<dbReference type="SUPFAM" id="SSF51206">
    <property type="entry name" value="cAMP-binding domain-like"/>
    <property type="match status" value="2"/>
</dbReference>
<dbReference type="PROSITE" id="PS00888">
    <property type="entry name" value="CNMP_BINDING_1"/>
    <property type="match status" value="1"/>
</dbReference>
<dbReference type="PROSITE" id="PS50042">
    <property type="entry name" value="CNMP_BINDING_3"/>
    <property type="match status" value="1"/>
</dbReference>
<organism>
    <name type="scientific">Macaca fascicularis</name>
    <name type="common">Crab-eating macaque</name>
    <name type="synonym">Cynomolgus monkey</name>
    <dbReference type="NCBI Taxonomy" id="9541"/>
    <lineage>
        <taxon>Eukaryota</taxon>
        <taxon>Metazoa</taxon>
        <taxon>Chordata</taxon>
        <taxon>Craniata</taxon>
        <taxon>Vertebrata</taxon>
        <taxon>Euteleostomi</taxon>
        <taxon>Mammalia</taxon>
        <taxon>Eutheria</taxon>
        <taxon>Euarchontoglires</taxon>
        <taxon>Primates</taxon>
        <taxon>Haplorrhini</taxon>
        <taxon>Catarrhini</taxon>
        <taxon>Cercopithecidae</taxon>
        <taxon>Cercopithecinae</taxon>
        <taxon>Macaca</taxon>
    </lineage>
</organism>
<name>CNBD2_MACFA</name>
<sequence length="585" mass="68620">MRRYMVTYAWQLLKKELGLYQFATDIIVMIRVCKMFRQGLRGFREYQIIESAHWKHPIFSFWDKKIQSRVTFDTMDFIAEEGHFPPKAIQIMQKKPSWRTEDEIQTVCNILQVLDSYRNYAEPLQLLLAKVMRFERFGRRRVIIKKGQKGNSFYFIYLGTVAITNDEDGSSAFLDPHPKLLQKGSCFGETDIQHASLRRSTIVCMEETEFLVVDREDFFANKLDQEVQKDAQYRFEFFRKMDLFASWSDEKLWQLVNMSKIERFSYGQLISKDFGESSFIMFISKGSCEVLRLLDLGASPSYHRWVWQHLELIDDRPLKTHLREYSPMERFKEFQIKSYPLQDFSSLKLLHLKKAWGLQGTSFSRKIGTSGDTLPKMLGPKIQSRPVQSIKCAMINTKFGELPKEAAVGAYMKVHTVEQGEILGLHQAFLPEGECDTRPLILMSLGNELIRIRKEIFYELIDNDDEMIKKLLKLNIAFPSDEDMCQKFLQENSWNIFRKDLLRLLVEPRQSPPFPPIRPKKKEIYNPKSVVLDLCSINKTTKPRYPIFMAPQKYLPPLRIVQAIKAPRYKIQELLPQYKSAGVLI</sequence>
<comment type="function">
    <text evidence="1">Essential for male fertility. Plays an important role in spermatogenesis and regulates sperm motility by controlling the development of the flagellar bending of sperm.</text>
</comment>
<comment type="subcellular location">
    <subcellularLocation>
        <location evidence="1">Cytoplasm</location>
        <location evidence="1">Cytosol</location>
    </subcellularLocation>
</comment>
<protein>
    <recommendedName>
        <fullName>Cyclic nucleotide-binding domain-containing protein 2</fullName>
    </recommendedName>
</protein>
<evidence type="ECO:0000250" key="1">
    <source>
        <dbReference type="UniProtKB" id="Q9D5U8"/>
    </source>
</evidence>
<evidence type="ECO:0000305" key="2"/>
<keyword id="KW-0114">cAMP</keyword>
<keyword id="KW-0116">cAMP-binding</keyword>
<keyword id="KW-0963">Cytoplasm</keyword>
<keyword id="KW-0547">Nucleotide-binding</keyword>
<keyword id="KW-1185">Reference proteome</keyword>
<accession>Q95JR6</accession>
<accession>Q95JT5</accession>
<feature type="chain" id="PRO_0000079472" description="Cyclic nucleotide-binding domain-containing protein 2">
    <location>
        <begin position="1"/>
        <end position="585"/>
    </location>
</feature>
<feature type="binding site">
    <location>
        <begin position="116"/>
        <end position="239"/>
    </location>
    <ligand>
        <name>a nucleoside 3',5'-cyclic phosphate</name>
        <dbReference type="ChEBI" id="CHEBI:58464"/>
    </ligand>
</feature>
<feature type="sequence conflict" description="In Ref. 1; BAB63039." evidence="2" ref="1">
    <original>Q</original>
    <variation>L</variation>
    <location>
        <position position="193"/>
    </location>
</feature>
<proteinExistence type="evidence at transcript level"/>
<reference key="1">
    <citation type="journal article" date="2002" name="BMC Genomics">
        <title>Cynomolgus monkey testicular cDNAs for discovery of novel human genes in the human genome sequence.</title>
        <authorList>
            <person name="Osada N."/>
            <person name="Hida M."/>
            <person name="Kusuda J."/>
            <person name="Tanuma R."/>
            <person name="Hirata M."/>
            <person name="Suto Y."/>
            <person name="Hirai M."/>
            <person name="Terao K."/>
            <person name="Sugano S."/>
            <person name="Hashimoto K."/>
        </authorList>
    </citation>
    <scope>NUCLEOTIDE SEQUENCE [LARGE SCALE MRNA]</scope>
    <source>
        <tissue>Testis</tissue>
    </source>
</reference>
<gene>
    <name type="primary">CNBD2</name>
    <name type="ORF">QtsA-11192</name>
    <name type="ORF">QtsA-13521</name>
</gene>